<proteinExistence type="evidence at protein level"/>
<feature type="chain" id="PRO_0000247787" description="Uncharacterized endoplasmic reticulum membrane protein YMR122W-A">
    <location>
        <begin position="1"/>
        <end position="84"/>
    </location>
</feature>
<feature type="transmembrane region" description="Helical" evidence="1">
    <location>
        <begin position="66"/>
        <end position="83"/>
    </location>
</feature>
<feature type="region of interest" description="Disordered" evidence="2">
    <location>
        <begin position="34"/>
        <end position="57"/>
    </location>
</feature>
<feature type="compositionally biased region" description="Low complexity" evidence="2">
    <location>
        <begin position="34"/>
        <end position="54"/>
    </location>
</feature>
<feature type="glycosylation site" description="N-linked (GlcNAc...) asparagine" evidence="1">
    <location>
        <position position="45"/>
    </location>
</feature>
<gene>
    <name type="ordered locus">YMR122W-A</name>
</gene>
<protein>
    <recommendedName>
        <fullName>Uncharacterized endoplasmic reticulum membrane protein YMR122W-A</fullName>
    </recommendedName>
</protein>
<comment type="subcellular location">
    <subcellularLocation>
        <location evidence="4">Endoplasmic reticulum membrane</location>
        <topology evidence="4">Single-pass membrane protein</topology>
    </subcellularLocation>
</comment>
<comment type="miscellaneous">
    <text evidence="3">Present with 49500 molecules/cell in log phase SD medium.</text>
</comment>
<sequence>MASSTSTSASASSSIKTNSALVSNNVVAASSVSATSTASSSAAKNTTSSSKNAAPGMVANPVSSKYGIIMAAFAAVSFVLGTGI</sequence>
<organism>
    <name type="scientific">Saccharomyces cerevisiae (strain ATCC 204508 / S288c)</name>
    <name type="common">Baker's yeast</name>
    <dbReference type="NCBI Taxonomy" id="559292"/>
    <lineage>
        <taxon>Eukaryota</taxon>
        <taxon>Fungi</taxon>
        <taxon>Dikarya</taxon>
        <taxon>Ascomycota</taxon>
        <taxon>Saccharomycotina</taxon>
        <taxon>Saccharomycetes</taxon>
        <taxon>Saccharomycetales</taxon>
        <taxon>Saccharomycetaceae</taxon>
        <taxon>Saccharomyces</taxon>
    </lineage>
</organism>
<reference key="1">
    <citation type="journal article" date="1997" name="Nature">
        <title>The nucleotide sequence of Saccharomyces cerevisiae chromosome XIII.</title>
        <authorList>
            <person name="Bowman S."/>
            <person name="Churcher C.M."/>
            <person name="Badcock K."/>
            <person name="Brown D."/>
            <person name="Chillingworth T."/>
            <person name="Connor R."/>
            <person name="Dedman K."/>
            <person name="Devlin K."/>
            <person name="Gentles S."/>
            <person name="Hamlin N."/>
            <person name="Hunt S."/>
            <person name="Jagels K."/>
            <person name="Lye G."/>
            <person name="Moule S."/>
            <person name="Odell C."/>
            <person name="Pearson D."/>
            <person name="Rajandream M.A."/>
            <person name="Rice P."/>
            <person name="Skelton J."/>
            <person name="Walsh S.V."/>
            <person name="Whitehead S."/>
            <person name="Barrell B.G."/>
        </authorList>
    </citation>
    <scope>NUCLEOTIDE SEQUENCE [LARGE SCALE GENOMIC DNA]</scope>
    <source>
        <strain>ATCC 204508 / S288c</strain>
    </source>
</reference>
<reference key="2">
    <citation type="journal article" date="2014" name="G3 (Bethesda)">
        <title>The reference genome sequence of Saccharomyces cerevisiae: Then and now.</title>
        <authorList>
            <person name="Engel S.R."/>
            <person name="Dietrich F.S."/>
            <person name="Fisk D.G."/>
            <person name="Binkley G."/>
            <person name="Balakrishnan R."/>
            <person name="Costanzo M.C."/>
            <person name="Dwight S.S."/>
            <person name="Hitz B.C."/>
            <person name="Karra K."/>
            <person name="Nash R.S."/>
            <person name="Weng S."/>
            <person name="Wong E.D."/>
            <person name="Lloyd P."/>
            <person name="Skrzypek M.S."/>
            <person name="Miyasato S.R."/>
            <person name="Simison M."/>
            <person name="Cherry J.M."/>
        </authorList>
    </citation>
    <scope>GENOME REANNOTATION</scope>
    <source>
        <strain>ATCC 204508 / S288c</strain>
    </source>
</reference>
<reference key="3">
    <citation type="journal article" date="1997" name="Nucleic Acids Res.">
        <title>Analysis of the yeast genome: identification of new non-coding and small ORF-containing RNAs.</title>
        <authorList>
            <person name="Olivas W.M."/>
            <person name="Muhlrad D."/>
            <person name="Parker R."/>
        </authorList>
    </citation>
    <scope>GENOME REANNOTATION</scope>
</reference>
<reference key="4">
    <citation type="journal article" date="2003" name="Nature">
        <title>Global analysis of protein localization in budding yeast.</title>
        <authorList>
            <person name="Huh W.-K."/>
            <person name="Falvo J.V."/>
            <person name="Gerke L.C."/>
            <person name="Carroll A.S."/>
            <person name="Howson R.W."/>
            <person name="Weissman J.S."/>
            <person name="O'Shea E.K."/>
        </authorList>
    </citation>
    <scope>SUBCELLULAR LOCATION [LARGE SCALE ANALYSIS]</scope>
</reference>
<reference key="5">
    <citation type="journal article" date="2003" name="Nature">
        <title>Global analysis of protein expression in yeast.</title>
        <authorList>
            <person name="Ghaemmaghami S."/>
            <person name="Huh W.-K."/>
            <person name="Bower K."/>
            <person name="Howson R.W."/>
            <person name="Belle A."/>
            <person name="Dephoure N."/>
            <person name="O'Shea E.K."/>
            <person name="Weissman J.S."/>
        </authorList>
    </citation>
    <scope>LEVEL OF PROTEIN EXPRESSION [LARGE SCALE ANALYSIS]</scope>
</reference>
<keyword id="KW-0256">Endoplasmic reticulum</keyword>
<keyword id="KW-0325">Glycoprotein</keyword>
<keyword id="KW-0472">Membrane</keyword>
<keyword id="KW-1185">Reference proteome</keyword>
<keyword id="KW-0812">Transmembrane</keyword>
<keyword id="KW-1133">Transmembrane helix</keyword>
<accession>Q3E842</accession>
<accession>D6VZU5</accession>
<name>YM122_YEAST</name>
<evidence type="ECO:0000255" key="1"/>
<evidence type="ECO:0000256" key="2">
    <source>
        <dbReference type="SAM" id="MobiDB-lite"/>
    </source>
</evidence>
<evidence type="ECO:0000269" key="3">
    <source>
    </source>
</evidence>
<evidence type="ECO:0000305" key="4"/>
<dbReference type="EMBL" id="Z49273">
    <property type="status" value="NOT_ANNOTATED_CDS"/>
    <property type="molecule type" value="Genomic_DNA"/>
</dbReference>
<dbReference type="EMBL" id="BK006946">
    <property type="protein sequence ID" value="DAA10019.1"/>
    <property type="molecule type" value="Genomic_DNA"/>
</dbReference>
<dbReference type="BioGRID" id="35299">
    <property type="interactions" value="44"/>
</dbReference>
<dbReference type="DIP" id="DIP-62124N"/>
<dbReference type="FunCoup" id="Q3E842">
    <property type="interactions" value="1"/>
</dbReference>
<dbReference type="STRING" id="4932.YMR122W-A"/>
<dbReference type="GlyGen" id="Q3E842">
    <property type="glycosylation" value="1 site"/>
</dbReference>
<dbReference type="iPTMnet" id="Q3E842"/>
<dbReference type="PaxDb" id="4932-YMR122W-A"/>
<dbReference type="PeptideAtlas" id="Q3E842"/>
<dbReference type="EnsemblFungi" id="YMR122W-A_mRNA">
    <property type="protein sequence ID" value="YMR122W-A"/>
    <property type="gene ID" value="YMR122W-A"/>
</dbReference>
<dbReference type="KEGG" id="sce:YMR122W-A"/>
<dbReference type="AGR" id="SGD:S000007524"/>
<dbReference type="SGD" id="S000007524">
    <property type="gene designation" value="YMR122W-A"/>
</dbReference>
<dbReference type="VEuPathDB" id="FungiDB:YMR122W-A"/>
<dbReference type="HOGENOM" id="CLU_162197_0_0_1"/>
<dbReference type="InParanoid" id="Q3E842"/>
<dbReference type="OMA" id="VSWKYGV"/>
<dbReference type="OrthoDB" id="4069957at2759"/>
<dbReference type="BioCyc" id="YEAST:G3O-33022-MONOMER"/>
<dbReference type="BioGRID-ORCS" id="855152">
    <property type="hits" value="1 hit in 10 CRISPR screens"/>
</dbReference>
<dbReference type="PRO" id="PR:Q3E842"/>
<dbReference type="Proteomes" id="UP000002311">
    <property type="component" value="Chromosome XIII"/>
</dbReference>
<dbReference type="RNAct" id="Q3E842">
    <property type="molecule type" value="protein"/>
</dbReference>
<dbReference type="GO" id="GO:0005737">
    <property type="term" value="C:cytoplasm"/>
    <property type="evidence" value="ECO:0007005"/>
    <property type="project" value="SGD"/>
</dbReference>
<dbReference type="GO" id="GO:0005783">
    <property type="term" value="C:endoplasmic reticulum"/>
    <property type="evidence" value="ECO:0007005"/>
    <property type="project" value="SGD"/>
</dbReference>
<dbReference type="GO" id="GO:0005789">
    <property type="term" value="C:endoplasmic reticulum membrane"/>
    <property type="evidence" value="ECO:0007669"/>
    <property type="project" value="UniProtKB-SubCell"/>
</dbReference>